<keyword id="KW-0903">Direct protein sequencing</keyword>
<keyword id="KW-1015">Disulfide bond</keyword>
<keyword id="KW-0872">Ion channel impairing toxin</keyword>
<keyword id="KW-0166">Nematocyst</keyword>
<keyword id="KW-1275">Proton-gated sodium channel impairing toxin</keyword>
<keyword id="KW-0964">Secreted</keyword>
<keyword id="KW-0800">Toxin</keyword>
<comment type="function">
    <text evidence="3">Weakly inhibits human homomeric ASIC3 (IC(50)=5.5 uM).</text>
</comment>
<comment type="subcellular location">
    <subcellularLocation>
        <location evidence="3">Secreted</location>
    </subcellularLocation>
    <subcellularLocation>
        <location evidence="5">Nematocyst</location>
    </subcellularLocation>
</comment>
<comment type="mass spectrometry" mass="4537.0" method="MALDI" evidence="3">
    <text>Average mass.</text>
</comment>
<comment type="miscellaneous">
    <text evidence="5">A synonymy between H.magnifica and R.crispa is controversial.</text>
</comment>
<comment type="similarity">
    <text evidence="5">Belongs to the sea anemone type 3 (BDS) potassium channel toxin family.</text>
</comment>
<proteinExistence type="evidence at protein level"/>
<sequence length="41" mass="4543">GTPCKCHGYIGVYWFMLAGCPNGYGYNLSCPYFLGICCVDR</sequence>
<dbReference type="SMR" id="P0DL87"/>
<dbReference type="GO" id="GO:0005576">
    <property type="term" value="C:extracellular region"/>
    <property type="evidence" value="ECO:0007669"/>
    <property type="project" value="UniProtKB-SubCell"/>
</dbReference>
<dbReference type="GO" id="GO:0042151">
    <property type="term" value="C:nematocyst"/>
    <property type="evidence" value="ECO:0007669"/>
    <property type="project" value="UniProtKB-SubCell"/>
</dbReference>
<dbReference type="GO" id="GO:0008200">
    <property type="term" value="F:ion channel inhibitor activity"/>
    <property type="evidence" value="ECO:0007669"/>
    <property type="project" value="InterPro"/>
</dbReference>
<dbReference type="GO" id="GO:0090729">
    <property type="term" value="F:toxin activity"/>
    <property type="evidence" value="ECO:0007669"/>
    <property type="project" value="UniProtKB-KW"/>
</dbReference>
<dbReference type="Gene3D" id="2.20.20.10">
    <property type="entry name" value="Anthopleurin-A"/>
    <property type="match status" value="1"/>
</dbReference>
<dbReference type="InterPro" id="IPR012414">
    <property type="entry name" value="BDS_K_chnl_tox"/>
</dbReference>
<dbReference type="InterPro" id="IPR023355">
    <property type="entry name" value="Myo_ane_neurotoxin_sf"/>
</dbReference>
<dbReference type="Pfam" id="PF07936">
    <property type="entry name" value="Defensin_4"/>
    <property type="match status" value="1"/>
</dbReference>
<dbReference type="SUPFAM" id="SSF57392">
    <property type="entry name" value="Defensin-like"/>
    <property type="match status" value="1"/>
</dbReference>
<organism>
    <name type="scientific">Radianthus crispa</name>
    <name type="common">Leathery sea anemone</name>
    <name type="synonym">Heteractis crispa</name>
    <dbReference type="NCBI Taxonomy" id="3122430"/>
    <lineage>
        <taxon>Eukaryota</taxon>
        <taxon>Metazoa</taxon>
        <taxon>Cnidaria</taxon>
        <taxon>Anthozoa</taxon>
        <taxon>Hexacorallia</taxon>
        <taxon>Actiniaria</taxon>
        <taxon>Stichodactylidae</taxon>
        <taxon>Radianthus</taxon>
    </lineage>
</organism>
<feature type="peptide" id="PRO_0000443398" description="Pi-stichotoxin-Hcr5a" evidence="3">
    <location>
        <begin position="1"/>
        <end position="41"/>
    </location>
</feature>
<feature type="disulfide bond" evidence="2">
    <location>
        <begin position="4"/>
        <end position="37"/>
    </location>
</feature>
<feature type="disulfide bond" evidence="2">
    <location>
        <begin position="6"/>
        <end position="30"/>
    </location>
</feature>
<feature type="disulfide bond" evidence="2">
    <location>
        <begin position="20"/>
        <end position="38"/>
    </location>
</feature>
<evidence type="ECO:0000250" key="1">
    <source>
        <dbReference type="UniProtKB" id="C0HL52"/>
    </source>
</evidence>
<evidence type="ECO:0000250" key="2">
    <source>
        <dbReference type="UniProtKB" id="P61541"/>
    </source>
</evidence>
<evidence type="ECO:0000269" key="3">
    <source>
    </source>
</evidence>
<evidence type="ECO:0000303" key="4">
    <source>
    </source>
</evidence>
<evidence type="ECO:0000305" key="5"/>
<accession>P0DL87</accession>
<reference key="1">
    <citation type="journal article" date="2012" name="Bioorg. Khim.">
        <title>Polypeptide toxin from sea anemone inhibiting proton-sensitive channel ASIC3.</title>
        <authorList>
            <person name="Kozlov S.A."/>
            <person name="Osmakov D.I."/>
            <person name="Andreev I.A."/>
            <person name="Koshelev S.G."/>
            <person name="Gladkikh I.N."/>
            <person name="Monastyrnaia M.M."/>
            <person name="Kozlovskaia E.P."/>
            <person name="Grishin E.V."/>
        </authorList>
    </citation>
    <scope>PROTEIN SEQUENCE</scope>
    <scope>FUNCTION</scope>
    <scope>MASS SPECTROMETRY</scope>
    <scope>SUBUNIT</scope>
</reference>
<protein>
    <recommendedName>
        <fullName evidence="5">Pi-stichotoxin-Hcr5a</fullName>
        <shortName evidence="5">Pi-SHTX-Hcr5a</shortName>
    </recommendedName>
    <alternativeName>
        <fullName evidence="1">APETx-like peptide</fullName>
    </alternativeName>
    <alternativeName>
        <fullName evidence="4">Pi-AnmTX Hcr 1b-1</fullName>
    </alternativeName>
</protein>
<name>BDSB1_RADCR</name>